<protein>
    <recommendedName>
        <fullName>Genome polyprotein</fullName>
    </recommendedName>
    <component>
        <recommendedName>
            <fullName>P1</fullName>
        </recommendedName>
    </component>
    <component>
        <recommendedName>
            <fullName>Capsid protein VP0</fullName>
        </recommendedName>
        <alternativeName>
            <fullName>VP4-VP2</fullName>
        </alternativeName>
    </component>
    <component>
        <recommendedName>
            <fullName>Capsid protein VP4</fullName>
        </recommendedName>
        <alternativeName>
            <fullName>P1A</fullName>
        </alternativeName>
        <alternativeName>
            <fullName>Virion protein 4</fullName>
        </alternativeName>
    </component>
    <component>
        <recommendedName>
            <fullName>Capsid protein VP2</fullName>
        </recommendedName>
        <alternativeName>
            <fullName>P1B</fullName>
        </alternativeName>
        <alternativeName>
            <fullName>Virion protein 2</fullName>
        </alternativeName>
    </component>
    <component>
        <recommendedName>
            <fullName>Capsid protein VP3</fullName>
        </recommendedName>
        <alternativeName>
            <fullName>P1C</fullName>
        </alternativeName>
        <alternativeName>
            <fullName>Virion protein 3</fullName>
        </alternativeName>
    </component>
    <component>
        <recommendedName>
            <fullName>Capsid protein VP1</fullName>
        </recommendedName>
        <alternativeName>
            <fullName>P1D</fullName>
        </alternativeName>
        <alternativeName>
            <fullName>Virion protein 1</fullName>
        </alternativeName>
    </component>
    <component>
        <recommendedName>
            <fullName>P2</fullName>
        </recommendedName>
    </component>
    <component>
        <recommendedName>
            <fullName>Protease 2A</fullName>
            <shortName>P2A</shortName>
            <ecNumber evidence="1">3.4.22.29</ecNumber>
        </recommendedName>
        <alternativeName>
            <fullName>Picornain 2A</fullName>
        </alternativeName>
        <alternativeName>
            <fullName>Protein 2A</fullName>
        </alternativeName>
    </component>
    <component>
        <recommendedName>
            <fullName>Protein 2B</fullName>
            <shortName>P2B</shortName>
        </recommendedName>
    </component>
    <component>
        <recommendedName>
            <fullName>Protein 2C</fullName>
            <shortName>P2C</shortName>
            <ecNumber evidence="1">3.6.1.15</ecNumber>
        </recommendedName>
    </component>
    <component>
        <recommendedName>
            <fullName>P3</fullName>
        </recommendedName>
    </component>
    <component>
        <recommendedName>
            <fullName>Protein 3AB</fullName>
        </recommendedName>
    </component>
    <component>
        <recommendedName>
            <fullName>Protein 3A</fullName>
            <shortName>P3A</shortName>
        </recommendedName>
    </component>
    <component>
        <recommendedName>
            <fullName>Viral protein genome-linked</fullName>
            <shortName>VPg</shortName>
        </recommendedName>
        <alternativeName>
            <fullName>Protein 3B</fullName>
            <shortName>P3B</shortName>
        </alternativeName>
    </component>
    <component>
        <recommendedName>
            <fullName>Protein 3CD</fullName>
            <ecNumber>3.4.22.28</ecNumber>
        </recommendedName>
    </component>
    <component>
        <recommendedName>
            <fullName evidence="10">Protease 3C</fullName>
            <ecNumber evidence="10">3.4.22.28</ecNumber>
        </recommendedName>
        <alternativeName>
            <fullName evidence="10">Picornain 3C</fullName>
            <shortName evidence="10">P3C</shortName>
        </alternativeName>
    </component>
    <component>
        <recommendedName>
            <fullName evidence="8">RNA-directed RNA polymerase</fullName>
            <shortName>RdRp</shortName>
            <ecNumber evidence="8">2.7.7.48</ecNumber>
        </recommendedName>
        <alternativeName>
            <fullName>3D polymerase</fullName>
            <shortName>3Dpol</shortName>
        </alternativeName>
        <alternativeName>
            <fullName>Protein 3D</fullName>
            <shortName>3D</shortName>
        </alternativeName>
    </component>
</protein>
<organismHost>
    <name type="scientific">Homo sapiens</name>
    <name type="common">Human</name>
    <dbReference type="NCBI Taxonomy" id="9606"/>
</organismHost>
<evidence type="ECO:0000250" key="1">
    <source>
        <dbReference type="UniProtKB" id="P03300"/>
    </source>
</evidence>
<evidence type="ECO:0000250" key="2">
    <source>
        <dbReference type="UniProtKB" id="P03303"/>
    </source>
</evidence>
<evidence type="ECO:0000250" key="3">
    <source>
        <dbReference type="UniProtKB" id="P03313"/>
    </source>
</evidence>
<evidence type="ECO:0000250" key="4">
    <source>
        <dbReference type="UniProtKB" id="P04936"/>
    </source>
</evidence>
<evidence type="ECO:0000250" key="5">
    <source>
        <dbReference type="UniProtKB" id="Q66478"/>
    </source>
</evidence>
<evidence type="ECO:0000250" key="6">
    <source>
        <dbReference type="UniProtKB" id="Q9QF31"/>
    </source>
</evidence>
<evidence type="ECO:0000255" key="7"/>
<evidence type="ECO:0000255" key="8">
    <source>
        <dbReference type="PROSITE-ProRule" id="PRU00539"/>
    </source>
</evidence>
<evidence type="ECO:0000255" key="9">
    <source>
        <dbReference type="PROSITE-ProRule" id="PRU00551"/>
    </source>
</evidence>
<evidence type="ECO:0000255" key="10">
    <source>
        <dbReference type="PROSITE-ProRule" id="PRU01222"/>
    </source>
</evidence>
<evidence type="ECO:0000269" key="11">
    <source>
    </source>
</evidence>
<evidence type="ECO:0000269" key="12">
    <source>
    </source>
</evidence>
<evidence type="ECO:0000269" key="13">
    <source>
    </source>
</evidence>
<evidence type="ECO:0000305" key="14"/>
<evidence type="ECO:0007829" key="15">
    <source>
        <dbReference type="PDB" id="8E8Z"/>
    </source>
</evidence>
<feature type="initiator methionine" description="Removed; by host" evidence="1">
    <location>
        <position position="1"/>
    </location>
</feature>
<feature type="chain" id="PRO_0000426596" description="Genome polyprotein">
    <location>
        <begin position="2"/>
        <end position="2209"/>
    </location>
</feature>
<feature type="chain" id="PRO_0000426597" description="P1">
    <location>
        <begin position="2"/>
        <end position="881"/>
    </location>
</feature>
<feature type="chain" id="PRO_0000426598" description="Capsid protein VP0">
    <location>
        <begin position="2"/>
        <end position="341"/>
    </location>
</feature>
<feature type="chain" id="PRO_0000426599" description="Capsid protein VP4">
    <location>
        <begin position="2"/>
        <end position="69"/>
    </location>
</feature>
<feature type="chain" id="PRO_0000426600" description="Capsid protein VP2">
    <location>
        <begin position="70"/>
        <end position="341"/>
    </location>
</feature>
<feature type="chain" id="PRO_0000426601" description="Capsid protein VP3">
    <location>
        <begin position="342"/>
        <end position="579"/>
    </location>
</feature>
<feature type="chain" id="PRO_0000426602" description="Capsid protein VP1">
    <location>
        <begin position="580"/>
        <end position="881"/>
    </location>
</feature>
<feature type="chain" id="PRO_0000426603" description="P2">
    <location>
        <begin position="882"/>
        <end position="1456"/>
    </location>
</feature>
<feature type="chain" id="PRO_0000426604" description="Protease 2A">
    <location>
        <begin position="882"/>
        <end position="1030"/>
    </location>
</feature>
<feature type="chain" id="PRO_0000040096" description="Protein 2B">
    <location>
        <begin position="1031"/>
        <end position="1127"/>
    </location>
</feature>
<feature type="chain" id="PRO_0000040097" description="Protein 2C">
    <location>
        <begin position="1128"/>
        <end position="1456"/>
    </location>
</feature>
<feature type="chain" id="PRO_0000426605" description="P3">
    <location>
        <begin position="1457"/>
        <end position="2209"/>
    </location>
</feature>
<feature type="chain" id="PRO_0000426606" description="Protein 3AB">
    <location>
        <begin position="1457"/>
        <end position="1565"/>
    </location>
</feature>
<feature type="chain" id="PRO_0000040098" description="Protein 3A">
    <location>
        <begin position="1457"/>
        <end position="1543"/>
    </location>
</feature>
<feature type="chain" id="PRO_0000426607" description="Viral protein genome-linked">
    <location>
        <begin position="1544"/>
        <end position="1565"/>
    </location>
</feature>
<feature type="chain" id="PRO_0000426608" description="Protein 3CD">
    <location>
        <begin position="1566"/>
        <end position="2209"/>
    </location>
</feature>
<feature type="chain" id="PRO_0000426609" description="Protease 3C">
    <location>
        <begin position="1566"/>
        <end position="1748"/>
    </location>
</feature>
<feature type="chain" id="PRO_0000426610" description="RNA-directed RNA polymerase">
    <location>
        <begin position="1749"/>
        <end position="2209"/>
    </location>
</feature>
<feature type="topological domain" description="Cytoplasmic" evidence="7">
    <location>
        <begin position="2"/>
        <end position="1520"/>
    </location>
</feature>
<feature type="intramembrane region" evidence="7">
    <location>
        <begin position="1521"/>
        <end position="1536"/>
    </location>
</feature>
<feature type="topological domain" description="Cytoplasmic" evidence="7">
    <location>
        <begin position="1537"/>
        <end position="2209"/>
    </location>
</feature>
<feature type="domain" description="SF3 helicase" evidence="9">
    <location>
        <begin position="1232"/>
        <end position="1388"/>
    </location>
</feature>
<feature type="domain" description="Peptidase C3" evidence="10">
    <location>
        <begin position="1566"/>
        <end position="1744"/>
    </location>
</feature>
<feature type="domain" description="RdRp catalytic" evidence="8">
    <location>
        <begin position="1975"/>
        <end position="2090"/>
    </location>
</feature>
<feature type="zinc finger region" description="C4-type" evidence="1">
    <location>
        <begin position="1396"/>
        <end position="1413"/>
    </location>
</feature>
<feature type="region of interest" description="Amphipathic alpha-helix" evidence="7">
    <location>
        <begin position="580"/>
        <end position="600"/>
    </location>
</feature>
<feature type="region of interest" description="Oligomerization" evidence="1">
    <location>
        <begin position="1128"/>
        <end position="1266"/>
    </location>
</feature>
<feature type="region of interest" description="Membrane-binding" evidence="1">
    <location>
        <begin position="1128"/>
        <end position="1200"/>
    </location>
</feature>
<feature type="region of interest" description="RNA-binding" evidence="1">
    <location>
        <begin position="1149"/>
        <end position="1153"/>
    </location>
</feature>
<feature type="region of interest" description="RNA-binding" evidence="1">
    <location>
        <begin position="1440"/>
        <end position="1447"/>
    </location>
</feature>
<feature type="region of interest" description="Oligomerization" evidence="1">
    <location>
        <begin position="1451"/>
        <end position="1456"/>
    </location>
</feature>
<feature type="active site" description="For protease 2A activity" evidence="1">
    <location>
        <position position="901"/>
    </location>
</feature>
<feature type="active site" description="For protease 2A activity" evidence="1">
    <location>
        <position position="919"/>
    </location>
</feature>
<feature type="active site" description="For protease 2A activity" evidence="1">
    <location>
        <position position="990"/>
    </location>
</feature>
<feature type="active site" description="For protease 3C activity" evidence="10 11">
    <location>
        <position position="1605"/>
    </location>
</feature>
<feature type="active site" description="For protease 3C activity" evidence="10 11">
    <location>
        <position position="1636"/>
    </location>
</feature>
<feature type="active site" description="For protease 3C activity" evidence="10 11">
    <location>
        <position position="1712"/>
    </location>
</feature>
<feature type="binding site" evidence="6">
    <location>
        <position position="936"/>
    </location>
    <ligand>
        <name>Zn(2+)</name>
        <dbReference type="ChEBI" id="CHEBI:29105"/>
        <label>1</label>
        <note>structural</note>
    </ligand>
</feature>
<feature type="binding site" evidence="6">
    <location>
        <position position="938"/>
    </location>
    <ligand>
        <name>Zn(2+)</name>
        <dbReference type="ChEBI" id="CHEBI:29105"/>
        <label>1</label>
        <note>structural</note>
    </ligand>
</feature>
<feature type="binding site" evidence="6">
    <location>
        <position position="996"/>
    </location>
    <ligand>
        <name>Zn(2+)</name>
        <dbReference type="ChEBI" id="CHEBI:29105"/>
        <label>1</label>
        <note>structural</note>
    </ligand>
</feature>
<feature type="binding site" evidence="6">
    <location>
        <position position="998"/>
    </location>
    <ligand>
        <name>Zn(2+)</name>
        <dbReference type="ChEBI" id="CHEBI:29105"/>
        <label>1</label>
        <note>structural</note>
    </ligand>
</feature>
<feature type="binding site" evidence="9">
    <location>
        <begin position="1256"/>
        <end position="1263"/>
    </location>
    <ligand>
        <name>ATP</name>
        <dbReference type="ChEBI" id="CHEBI:30616"/>
    </ligand>
</feature>
<feature type="binding site" evidence="1">
    <location>
        <position position="1396"/>
    </location>
    <ligand>
        <name>Zn(2+)</name>
        <dbReference type="ChEBI" id="CHEBI:29105"/>
        <label>2</label>
    </ligand>
</feature>
<feature type="binding site" evidence="1">
    <location>
        <position position="1399"/>
    </location>
    <ligand>
        <name>Zn(2+)</name>
        <dbReference type="ChEBI" id="CHEBI:29105"/>
        <label>2</label>
    </ligand>
</feature>
<feature type="binding site" evidence="1">
    <location>
        <position position="1408"/>
    </location>
    <ligand>
        <name>Zn(2+)</name>
        <dbReference type="ChEBI" id="CHEBI:29105"/>
        <label>2</label>
    </ligand>
</feature>
<feature type="binding site" evidence="1">
    <location>
        <position position="1413"/>
    </location>
    <ligand>
        <name>Zn(2+)</name>
        <dbReference type="ChEBI" id="CHEBI:29105"/>
        <label>2</label>
    </ligand>
</feature>
<feature type="binding site" evidence="1">
    <location>
        <position position="1981"/>
    </location>
    <ligand>
        <name>Mg(2+)</name>
        <dbReference type="ChEBI" id="CHEBI:18420"/>
        <label>1</label>
        <note>catalytic; for RdRp activity</note>
    </ligand>
</feature>
<feature type="binding site" evidence="1">
    <location>
        <position position="1981"/>
    </location>
    <ligand>
        <name>Mg(2+)</name>
        <dbReference type="ChEBI" id="CHEBI:18420"/>
        <label>2</label>
        <note>catalytic; for RdRp activity</note>
    </ligand>
</feature>
<feature type="binding site" evidence="1">
    <location>
        <position position="2076"/>
    </location>
    <ligand>
        <name>Mg(2+)</name>
        <dbReference type="ChEBI" id="CHEBI:18420"/>
        <label>1</label>
        <note>catalytic; for RdRp activity</note>
    </ligand>
</feature>
<feature type="binding site" evidence="1">
    <location>
        <position position="2076"/>
    </location>
    <ligand>
        <name>Mg(2+)</name>
        <dbReference type="ChEBI" id="CHEBI:18420"/>
        <label>2</label>
        <note>catalytic; for RdRp activity</note>
    </ligand>
</feature>
<feature type="site" description="Cleavage; by autolysis" evidence="1">
    <location>
        <begin position="69"/>
        <end position="70"/>
    </location>
</feature>
<feature type="site" description="Cleavage; by protease 3C" evidence="12">
    <location>
        <begin position="341"/>
        <end position="342"/>
    </location>
</feature>
<feature type="site" description="Cleavage; by protease 3C" evidence="12">
    <location>
        <begin position="579"/>
        <end position="580"/>
    </location>
</feature>
<feature type="site" description="Cleavage; by autolysis" evidence="12">
    <location>
        <begin position="881"/>
        <end position="882"/>
    </location>
</feature>
<feature type="site" description="Cleavage; by protease 3C" evidence="12">
    <location>
        <begin position="1030"/>
        <end position="1031"/>
    </location>
</feature>
<feature type="site" description="Cleavage; by protease 3C" evidence="12">
    <location>
        <begin position="1127"/>
        <end position="1128"/>
    </location>
</feature>
<feature type="site" description="Involved in the interaction with host RTN3" evidence="5">
    <location>
        <position position="1152"/>
    </location>
</feature>
<feature type="site" description="Cleavage; by protease 3C" evidence="12">
    <location>
        <begin position="1456"/>
        <end position="1457"/>
    </location>
</feature>
<feature type="site" description="Cleavage; by protease 3C" evidence="12">
    <location>
        <begin position="1543"/>
        <end position="1544"/>
    </location>
</feature>
<feature type="site" description="Cleavage; by protease 3C" evidence="12">
    <location>
        <begin position="1565"/>
        <end position="1566"/>
    </location>
</feature>
<feature type="site" description="Cleavage; by protease 3C" evidence="12">
    <location>
        <begin position="1748"/>
        <end position="1749"/>
    </location>
</feature>
<feature type="modified residue" description="O-(5'-phospho-RNA)-tyrosine" evidence="1">
    <location>
        <position position="1546"/>
    </location>
</feature>
<feature type="lipid moiety-binding region" description="N-myristoyl glycine; by host" evidence="1">
    <location>
        <position position="2"/>
    </location>
</feature>
<feature type="mutagenesis site" description="Complete loss of protease activity." evidence="11">
    <original>H</original>
    <variation>Y</variation>
    <location>
        <position position="1605"/>
    </location>
</feature>
<feature type="mutagenesis site" description="Complete loss of protease activity." evidence="11">
    <original>E</original>
    <variation>Q</variation>
    <location>
        <position position="1636"/>
    </location>
</feature>
<feature type="mutagenesis site" description="No effect on protease activity; complete loss of autoprocessing ability." evidence="11">
    <original>D</original>
    <variation>N</variation>
    <location>
        <position position="1650"/>
    </location>
</feature>
<feature type="mutagenesis site" description="Complete loss of protease activity." evidence="11">
    <original>C</original>
    <variation>S</variation>
    <location>
        <position position="1712"/>
    </location>
</feature>
<feature type="strand" evidence="15">
    <location>
        <begin position="4"/>
        <end position="7"/>
    </location>
</feature>
<feature type="strand" evidence="15">
    <location>
        <begin position="26"/>
        <end position="29"/>
    </location>
</feature>
<feature type="strand" evidence="15">
    <location>
        <begin position="33"/>
        <end position="35"/>
    </location>
</feature>
<feature type="helix" evidence="15">
    <location>
        <begin position="36"/>
        <end position="38"/>
    </location>
</feature>
<feature type="helix" evidence="15">
    <location>
        <begin position="51"/>
        <end position="54"/>
    </location>
</feature>
<feature type="strand" evidence="15">
    <location>
        <begin position="57"/>
        <end position="59"/>
    </location>
</feature>
<feature type="strand" evidence="15">
    <location>
        <begin position="83"/>
        <end position="87"/>
    </location>
</feature>
<feature type="strand" evidence="15">
    <location>
        <begin position="90"/>
        <end position="97"/>
    </location>
</feature>
<feature type="helix" evidence="15">
    <location>
        <begin position="103"/>
        <end position="105"/>
    </location>
</feature>
<feature type="turn" evidence="15">
    <location>
        <begin position="113"/>
        <end position="115"/>
    </location>
</feature>
<feature type="helix" evidence="15">
    <location>
        <begin position="126"/>
        <end position="128"/>
    </location>
</feature>
<feature type="strand" evidence="15">
    <location>
        <begin position="138"/>
        <end position="140"/>
    </location>
</feature>
<feature type="strand" evidence="15">
    <location>
        <begin position="147"/>
        <end position="151"/>
    </location>
</feature>
<feature type="helix" evidence="15">
    <location>
        <begin position="153"/>
        <end position="155"/>
    </location>
</feature>
<feature type="helix" evidence="15">
    <location>
        <begin position="159"/>
        <end position="167"/>
    </location>
</feature>
<feature type="strand" evidence="15">
    <location>
        <begin position="168"/>
        <end position="180"/>
    </location>
</feature>
<feature type="strand" evidence="15">
    <location>
        <begin position="188"/>
        <end position="197"/>
    </location>
</feature>
<feature type="strand" evidence="15">
    <location>
        <begin position="206"/>
        <end position="208"/>
    </location>
</feature>
<feature type="helix" evidence="15">
    <location>
        <begin position="214"/>
        <end position="217"/>
    </location>
</feature>
<feature type="helix" evidence="15">
    <location>
        <begin position="220"/>
        <end position="222"/>
    </location>
</feature>
<feature type="strand" evidence="15">
    <location>
        <begin position="227"/>
        <end position="229"/>
    </location>
</feature>
<feature type="turn" evidence="15">
    <location>
        <begin position="247"/>
        <end position="253"/>
    </location>
</feature>
<feature type="helix" evidence="15">
    <location>
        <begin position="256"/>
        <end position="261"/>
    </location>
</feature>
<feature type="strand" evidence="15">
    <location>
        <begin position="262"/>
        <end position="268"/>
    </location>
</feature>
<feature type="turn" evidence="15">
    <location>
        <begin position="269"/>
        <end position="271"/>
    </location>
</feature>
<feature type="strand" evidence="15">
    <location>
        <begin position="273"/>
        <end position="279"/>
    </location>
</feature>
<feature type="strand" evidence="15">
    <location>
        <begin position="284"/>
        <end position="288"/>
    </location>
</feature>
<feature type="turn" evidence="15">
    <location>
        <begin position="290"/>
        <end position="292"/>
    </location>
</feature>
<feature type="strand" evidence="15">
    <location>
        <begin position="296"/>
        <end position="307"/>
    </location>
</feature>
<feature type="strand" evidence="15">
    <location>
        <begin position="316"/>
        <end position="332"/>
    </location>
</feature>
<feature type="turn" evidence="15">
    <location>
        <begin position="349"/>
        <end position="352"/>
    </location>
</feature>
<feature type="strand" evidence="15">
    <location>
        <begin position="364"/>
        <end position="366"/>
    </location>
</feature>
<feature type="strand" evidence="15">
    <location>
        <begin position="381"/>
        <end position="383"/>
    </location>
</feature>
<feature type="helix" evidence="15">
    <location>
        <begin position="385"/>
        <end position="388"/>
    </location>
</feature>
<feature type="turn" evidence="15">
    <location>
        <begin position="400"/>
        <end position="404"/>
    </location>
</feature>
<feature type="helix" evidence="15">
    <location>
        <begin position="406"/>
        <end position="409"/>
    </location>
</feature>
<feature type="strand" evidence="15">
    <location>
        <begin position="411"/>
        <end position="414"/>
    </location>
</feature>
<feature type="strand" evidence="15">
    <location>
        <begin position="423"/>
        <end position="426"/>
    </location>
</feature>
<feature type="turn" evidence="15">
    <location>
        <begin position="430"/>
        <end position="432"/>
    </location>
</feature>
<feature type="helix" evidence="15">
    <location>
        <begin position="436"/>
        <end position="438"/>
    </location>
</feature>
<feature type="helix" evidence="15">
    <location>
        <begin position="440"/>
        <end position="446"/>
    </location>
</feature>
<feature type="strand" evidence="15">
    <location>
        <begin position="447"/>
        <end position="453"/>
    </location>
</feature>
<feature type="strand" evidence="15">
    <location>
        <begin position="455"/>
        <end position="461"/>
    </location>
</feature>
<feature type="strand" evidence="15">
    <location>
        <begin position="470"/>
        <end position="476"/>
    </location>
</feature>
<feature type="strand" evidence="15">
    <location>
        <begin position="478"/>
        <end position="480"/>
    </location>
</feature>
<feature type="helix" evidence="15">
    <location>
        <begin position="486"/>
        <end position="489"/>
    </location>
</feature>
<feature type="strand" evidence="15">
    <location>
        <begin position="492"/>
        <end position="498"/>
    </location>
</feature>
<feature type="strand" evidence="15">
    <location>
        <begin position="500"/>
        <end position="502"/>
    </location>
</feature>
<feature type="strand" evidence="15">
    <location>
        <begin position="504"/>
        <end position="509"/>
    </location>
</feature>
<feature type="strand" evidence="15">
    <location>
        <begin position="514"/>
        <end position="521"/>
    </location>
</feature>
<feature type="helix" evidence="15">
    <location>
        <begin position="524"/>
        <end position="526"/>
    </location>
</feature>
<feature type="strand" evidence="15">
    <location>
        <begin position="530"/>
        <end position="537"/>
    </location>
</feature>
<feature type="strand" evidence="15">
    <location>
        <begin position="547"/>
        <end position="557"/>
    </location>
</feature>
<feature type="helix" evidence="15">
    <location>
        <begin position="626"/>
        <end position="628"/>
    </location>
</feature>
<feature type="helix" evidence="15">
    <location>
        <begin position="636"/>
        <end position="638"/>
    </location>
</feature>
<feature type="helix" evidence="15">
    <location>
        <begin position="652"/>
        <end position="654"/>
    </location>
</feature>
<feature type="helix" evidence="15">
    <location>
        <begin position="656"/>
        <end position="659"/>
    </location>
</feature>
<feature type="strand" evidence="15">
    <location>
        <begin position="664"/>
        <end position="673"/>
    </location>
</feature>
<feature type="strand" evidence="15">
    <location>
        <begin position="685"/>
        <end position="688"/>
    </location>
</feature>
<feature type="helix" evidence="15">
    <location>
        <begin position="695"/>
        <end position="701"/>
    </location>
</feature>
<feature type="strand" evidence="15">
    <location>
        <begin position="704"/>
        <end position="721"/>
    </location>
</feature>
<feature type="strand" evidence="15">
    <location>
        <begin position="733"/>
        <end position="739"/>
    </location>
</feature>
<feature type="helix" evidence="15">
    <location>
        <begin position="752"/>
        <end position="755"/>
    </location>
</feature>
<feature type="strand" evidence="15">
    <location>
        <begin position="757"/>
        <end position="759"/>
    </location>
</feature>
<feature type="strand" evidence="15">
    <location>
        <begin position="761"/>
        <end position="765"/>
    </location>
</feature>
<feature type="strand" evidence="15">
    <location>
        <begin position="771"/>
        <end position="775"/>
    </location>
</feature>
<feature type="strand" evidence="15">
    <location>
        <begin position="780"/>
        <end position="786"/>
    </location>
</feature>
<feature type="strand" evidence="15">
    <location>
        <begin position="790"/>
        <end position="793"/>
    </location>
</feature>
<feature type="strand" evidence="15">
    <location>
        <begin position="796"/>
        <end position="799"/>
    </location>
</feature>
<feature type="helix" evidence="15">
    <location>
        <begin position="801"/>
        <end position="804"/>
    </location>
</feature>
<feature type="strand" evidence="15">
    <location>
        <begin position="813"/>
        <end position="816"/>
    </location>
</feature>
<feature type="strand" evidence="15">
    <location>
        <begin position="818"/>
        <end position="823"/>
    </location>
</feature>
<feature type="strand" evidence="15">
    <location>
        <begin position="832"/>
        <end position="847"/>
    </location>
</feature>
<feature type="strand" evidence="15">
    <location>
        <begin position="860"/>
        <end position="863"/>
    </location>
</feature>
<accession>P03301</accession>
<accession>Q84881</accession>
<accession>Q84882</accession>
<accession>Q84883</accession>
<accession>Q84884</accession>
<accession>Q84885</accession>
<accession>Q84886</accession>
<accession>Q84887</accession>
<accession>Q84888</accession>
<accession>Q84889</accession>
<accession>Q84890</accession>
<reference key="1">
    <citation type="journal article" date="1982" name="Proc. Natl. Acad. Sci. U.S.A.">
        <title>Complete nucleotide sequence of the attenuated poliovirus Sabin 1 strain genome.</title>
        <authorList>
            <person name="Nomoto A."/>
            <person name="Omata T."/>
            <person name="Toyoda H."/>
            <person name="Kuge S."/>
            <person name="Horie H."/>
            <person name="Kataoka Y."/>
            <person name="Genba Y."/>
            <person name="Nakano Y."/>
            <person name="Imura N."/>
        </authorList>
    </citation>
    <scope>NUCLEOTIDE SEQUENCE [GENOMIC RNA]</scope>
</reference>
<reference key="2">
    <citation type="journal article" date="1986" name="Cell">
        <title>A second virus-encoded proteinase involved in proteolytic processing of poliovirus polyprotein.</title>
        <authorList>
            <person name="Toyoda H."/>
            <person name="Nicklin M.J."/>
            <person name="Murray M.G."/>
            <person name="Anderson C.W."/>
            <person name="Dunn J.J."/>
            <person name="Studier F.W."/>
            <person name="Wimmer E."/>
        </authorList>
    </citation>
    <scope>PROTEIN SEQUENCE OF 882-905</scope>
    <scope>PROTEOLYTIC CLEAVAGE (GENOME POLYPROTEIN)</scope>
    <scope>FUNCTION (PROTEASE 2A)</scope>
</reference>
<reference key="3">
    <citation type="journal article" date="1991" name="J. Biol. Chem.">
        <title>Site-directed mutagenesis of the putative catalytic triad of poliovirus 3C proteinase.</title>
        <authorList>
            <person name="Haemmerle T."/>
            <person name="Hellen C.U.T."/>
            <person name="Wimmer E."/>
        </authorList>
    </citation>
    <scope>ACTIVE SITE (PROTEASE 3C)</scope>
    <scope>MUTAGENESIS OF HIS-1605; GLU-1636; ASP-1650 AND CYS-1712</scope>
</reference>
<reference key="4">
    <citation type="journal article" date="2019" name="J. Virol.">
        <title>Essential Role of Enterovirus 2A Protease in Counteracting Stress Granule Formation and the Induction of Type I Interferon.</title>
        <authorList>
            <person name="Visser L.J."/>
            <person name="Langereis M.A."/>
            <person name="Rabouw H.H."/>
            <person name="Wahedi M."/>
            <person name="Muntjewerff E.M."/>
            <person name="de Groot R.J."/>
            <person name="van Kuppeveld F.J.M."/>
        </authorList>
    </citation>
    <scope>FUNCTION (PROTEASE 2A)</scope>
</reference>
<keyword id="KW-0002">3D-structure</keyword>
<keyword id="KW-1072">Activation of host autophagy by virus</keyword>
<keyword id="KW-0067">ATP-binding</keyword>
<keyword id="KW-0068">Autocatalytic cleavage</keyword>
<keyword id="KW-0167">Capsid protein</keyword>
<keyword id="KW-1167">Clathrin- and caveolin-independent endocytosis of virus by host</keyword>
<keyword id="KW-0191">Covalent protein-RNA linkage</keyword>
<keyword id="KW-0903">Direct protein sequencing</keyword>
<keyword id="KW-0235">DNA replication</keyword>
<keyword id="KW-1262">Eukaryotic host gene expression shutoff by virus</keyword>
<keyword id="KW-1191">Eukaryotic host transcription shutoff by virus</keyword>
<keyword id="KW-1193">Eukaryotic host translation shutoff by virus</keyword>
<keyword id="KW-0347">Helicase</keyword>
<keyword id="KW-1035">Host cytoplasm</keyword>
<keyword id="KW-1036">Host cytoplasmic vesicle</keyword>
<keyword id="KW-1190">Host gene expression shutoff by virus</keyword>
<keyword id="KW-1043">Host membrane</keyword>
<keyword id="KW-1192">Host mRNA suppression by virus</keyword>
<keyword id="KW-1048">Host nucleus</keyword>
<keyword id="KW-0945">Host-virus interaction</keyword>
<keyword id="KW-0378">Hydrolase</keyword>
<keyword id="KW-1111">Inhibition of eukaryotic host transcription initiation by virus</keyword>
<keyword id="KW-1090">Inhibition of host innate immune response by virus</keyword>
<keyword id="KW-1097">Inhibition of host MAVS by virus</keyword>
<keyword id="KW-1089">Inhibition of host MDA5 by virus</keyword>
<keyword id="KW-1099">Inhibition of host mRNA nuclear export by virus</keyword>
<keyword id="KW-1088">Inhibition of host RIG-I by virus</keyword>
<keyword id="KW-1113">Inhibition of host RLR pathway by virus</keyword>
<keyword id="KW-0407">Ion channel</keyword>
<keyword id="KW-0406">Ion transport</keyword>
<keyword id="KW-0449">Lipoprotein</keyword>
<keyword id="KW-0460">Magnesium</keyword>
<keyword id="KW-0472">Membrane</keyword>
<keyword id="KW-0479">Metal-binding</keyword>
<keyword id="KW-0519">Myristate</keyword>
<keyword id="KW-0547">Nucleotide-binding</keyword>
<keyword id="KW-0548">Nucleotidyltransferase</keyword>
<keyword id="KW-0597">Phosphoprotein</keyword>
<keyword id="KW-1172">Pore-mediated penetration of viral genome into host cell</keyword>
<keyword id="KW-0645">Protease</keyword>
<keyword id="KW-0677">Repeat</keyword>
<keyword id="KW-0694">RNA-binding</keyword>
<keyword id="KW-0696">RNA-directed RNA polymerase</keyword>
<keyword id="KW-1143">T=pseudo3 icosahedral capsid protein</keyword>
<keyword id="KW-0788">Thiol protease</keyword>
<keyword id="KW-0808">Transferase</keyword>
<keyword id="KW-0813">Transport</keyword>
<keyword id="KW-1161">Viral attachment to host cell</keyword>
<keyword id="KW-0899">Viral immunoevasion</keyword>
<keyword id="KW-1182">Viral ion channel</keyword>
<keyword id="KW-1162">Viral penetration into host cytoplasm</keyword>
<keyword id="KW-0693">Viral RNA replication</keyword>
<keyword id="KW-0946">Virion</keyword>
<keyword id="KW-1164">Virus endocytosis by host</keyword>
<keyword id="KW-1160">Virus entry into host cell</keyword>
<keyword id="KW-0862">Zinc</keyword>
<keyword id="KW-0863">Zinc-finger</keyword>
<dbReference type="EC" id="3.4.22.29" evidence="1"/>
<dbReference type="EC" id="3.6.1.15" evidence="1"/>
<dbReference type="EC" id="3.4.22.28" evidence="10"/>
<dbReference type="EC" id="2.7.7.48" evidence="8"/>
<dbReference type="EMBL" id="V01150">
    <property type="protein sequence ID" value="CAA24465.1"/>
    <property type="molecule type" value="Genomic_RNA"/>
</dbReference>
<dbReference type="PIR" id="A03899">
    <property type="entry name" value="GNNY3P"/>
</dbReference>
<dbReference type="PDB" id="8E8Z">
    <property type="method" value="EM"/>
    <property type="resolution" value="3.15 A"/>
    <property type="chains" value="1=601-881, 4=2-69"/>
</dbReference>
<dbReference type="PDBsum" id="8E8Z"/>
<dbReference type="BMRB" id="P03301"/>
<dbReference type="EMDB" id="EMD-27951"/>
<dbReference type="SMR" id="P03301"/>
<dbReference type="IntAct" id="P03301">
    <property type="interactions" value="3"/>
</dbReference>
<dbReference type="MINT" id="P03301"/>
<dbReference type="MEROPS" id="C03.020"/>
<dbReference type="Proteomes" id="UP000000478">
    <property type="component" value="Genome"/>
</dbReference>
<dbReference type="GO" id="GO:0044162">
    <property type="term" value="C:host cell cytoplasmic vesicle membrane"/>
    <property type="evidence" value="ECO:0007669"/>
    <property type="project" value="UniProtKB-SubCell"/>
</dbReference>
<dbReference type="GO" id="GO:0042025">
    <property type="term" value="C:host cell nucleus"/>
    <property type="evidence" value="ECO:0007669"/>
    <property type="project" value="UniProtKB-SubCell"/>
</dbReference>
<dbReference type="GO" id="GO:0016020">
    <property type="term" value="C:membrane"/>
    <property type="evidence" value="ECO:0007669"/>
    <property type="project" value="UniProtKB-KW"/>
</dbReference>
<dbReference type="GO" id="GO:0039618">
    <property type="term" value="C:T=pseudo3 icosahedral viral capsid"/>
    <property type="evidence" value="ECO:0007669"/>
    <property type="project" value="UniProtKB-KW"/>
</dbReference>
<dbReference type="GO" id="GO:0005524">
    <property type="term" value="F:ATP binding"/>
    <property type="evidence" value="ECO:0007669"/>
    <property type="project" value="UniProtKB-KW"/>
</dbReference>
<dbReference type="GO" id="GO:0015267">
    <property type="term" value="F:channel activity"/>
    <property type="evidence" value="ECO:0007669"/>
    <property type="project" value="UniProtKB-KW"/>
</dbReference>
<dbReference type="GO" id="GO:0004197">
    <property type="term" value="F:cysteine-type endopeptidase activity"/>
    <property type="evidence" value="ECO:0007669"/>
    <property type="project" value="UniProtKB-EC"/>
</dbReference>
<dbReference type="GO" id="GO:0017111">
    <property type="term" value="F:ribonucleoside triphosphate phosphatase activity"/>
    <property type="evidence" value="ECO:0007669"/>
    <property type="project" value="UniProtKB-EC"/>
</dbReference>
<dbReference type="GO" id="GO:0003723">
    <property type="term" value="F:RNA binding"/>
    <property type="evidence" value="ECO:0007669"/>
    <property type="project" value="UniProtKB-KW"/>
</dbReference>
<dbReference type="GO" id="GO:0003724">
    <property type="term" value="F:RNA helicase activity"/>
    <property type="evidence" value="ECO:0007669"/>
    <property type="project" value="InterPro"/>
</dbReference>
<dbReference type="GO" id="GO:0003968">
    <property type="term" value="F:RNA-directed RNA polymerase activity"/>
    <property type="evidence" value="ECO:0007669"/>
    <property type="project" value="UniProtKB-KW"/>
</dbReference>
<dbReference type="GO" id="GO:0005198">
    <property type="term" value="F:structural molecule activity"/>
    <property type="evidence" value="ECO:0007669"/>
    <property type="project" value="InterPro"/>
</dbReference>
<dbReference type="GO" id="GO:0008270">
    <property type="term" value="F:zinc ion binding"/>
    <property type="evidence" value="ECO:0007669"/>
    <property type="project" value="UniProtKB-KW"/>
</dbReference>
<dbReference type="GO" id="GO:0006260">
    <property type="term" value="P:DNA replication"/>
    <property type="evidence" value="ECO:0007669"/>
    <property type="project" value="UniProtKB-KW"/>
</dbReference>
<dbReference type="GO" id="GO:0006351">
    <property type="term" value="P:DNA-templated transcription"/>
    <property type="evidence" value="ECO:0007669"/>
    <property type="project" value="InterPro"/>
</dbReference>
<dbReference type="GO" id="GO:0034220">
    <property type="term" value="P:monoatomic ion transmembrane transport"/>
    <property type="evidence" value="ECO:0007669"/>
    <property type="project" value="UniProtKB-KW"/>
</dbReference>
<dbReference type="GO" id="GO:0006508">
    <property type="term" value="P:proteolysis"/>
    <property type="evidence" value="ECO:0007669"/>
    <property type="project" value="UniProtKB-KW"/>
</dbReference>
<dbReference type="GO" id="GO:0019065">
    <property type="term" value="P:receptor-mediated endocytosis of virus by host cell"/>
    <property type="evidence" value="ECO:0007669"/>
    <property type="project" value="UniProtKB-KW"/>
</dbReference>
<dbReference type="GO" id="GO:0044694">
    <property type="term" value="P:symbiont genome entry into host cell via pore formation in plasma membrane"/>
    <property type="evidence" value="ECO:0007669"/>
    <property type="project" value="UniProtKB-KW"/>
</dbReference>
<dbReference type="GO" id="GO:0039520">
    <property type="term" value="P:symbiont-mediated activation of host autophagy"/>
    <property type="evidence" value="ECO:0000250"/>
    <property type="project" value="UniProtKB"/>
</dbReference>
<dbReference type="GO" id="GO:0039545">
    <property type="term" value="P:symbiont-mediated suppression of host cytoplasmic pattern recognition receptor signaling pathway via inhibition of MAVS activity"/>
    <property type="evidence" value="ECO:0007669"/>
    <property type="project" value="UniProtKB-KW"/>
</dbReference>
<dbReference type="GO" id="GO:0039554">
    <property type="term" value="P:symbiont-mediated suppression of host cytoplasmic pattern recognition receptor signaling pathway via inhibition of MDA-5 activity"/>
    <property type="evidence" value="ECO:0007669"/>
    <property type="project" value="UniProtKB-KW"/>
</dbReference>
<dbReference type="GO" id="GO:0039540">
    <property type="term" value="P:symbiont-mediated suppression of host cytoplasmic pattern recognition receptor signaling pathway via inhibition of RIG-I activity"/>
    <property type="evidence" value="ECO:0007669"/>
    <property type="project" value="UniProtKB-KW"/>
</dbReference>
<dbReference type="GO" id="GO:0039522">
    <property type="term" value="P:symbiont-mediated suppression of host mRNA export from nucleus"/>
    <property type="evidence" value="ECO:0007669"/>
    <property type="project" value="UniProtKB-KW"/>
</dbReference>
<dbReference type="GO" id="GO:0039694">
    <property type="term" value="P:viral RNA genome replication"/>
    <property type="evidence" value="ECO:0007669"/>
    <property type="project" value="InterPro"/>
</dbReference>
<dbReference type="GO" id="GO:0019062">
    <property type="term" value="P:virion attachment to host cell"/>
    <property type="evidence" value="ECO:0007669"/>
    <property type="project" value="UniProtKB-KW"/>
</dbReference>
<dbReference type="CDD" id="cd23213">
    <property type="entry name" value="Enterovirus_RdRp"/>
    <property type="match status" value="1"/>
</dbReference>
<dbReference type="CDD" id="cd00205">
    <property type="entry name" value="rhv_like"/>
    <property type="match status" value="3"/>
</dbReference>
<dbReference type="FunFam" id="1.20.960.20:FF:000001">
    <property type="entry name" value="Genome polyprotein"/>
    <property type="match status" value="1"/>
</dbReference>
<dbReference type="FunFam" id="2.40.10.10:FF:000018">
    <property type="entry name" value="Genome polyprotein"/>
    <property type="match status" value="1"/>
</dbReference>
<dbReference type="FunFam" id="2.40.10.10:FF:000020">
    <property type="entry name" value="Genome polyprotein"/>
    <property type="match status" value="1"/>
</dbReference>
<dbReference type="FunFam" id="2.40.10.10:FF:000022">
    <property type="entry name" value="Genome polyprotein"/>
    <property type="match status" value="1"/>
</dbReference>
<dbReference type="FunFam" id="2.60.120.20:FF:000001">
    <property type="entry name" value="Genome polyprotein"/>
    <property type="match status" value="1"/>
</dbReference>
<dbReference type="FunFam" id="2.60.120.20:FF:000002">
    <property type="entry name" value="Genome polyprotein"/>
    <property type="match status" value="1"/>
</dbReference>
<dbReference type="FunFam" id="2.60.120.20:FF:000003">
    <property type="entry name" value="Genome polyprotein"/>
    <property type="match status" value="1"/>
</dbReference>
<dbReference type="FunFam" id="3.30.70.270:FF:000008">
    <property type="entry name" value="Genome polyprotein"/>
    <property type="match status" value="1"/>
</dbReference>
<dbReference type="FunFam" id="4.10.880.10:FF:000001">
    <property type="entry name" value="Genome polyprotein"/>
    <property type="match status" value="1"/>
</dbReference>
<dbReference type="FunFam" id="4.10.880.10:FF:000002">
    <property type="entry name" value="Genome polyprotein"/>
    <property type="match status" value="1"/>
</dbReference>
<dbReference type="Gene3D" id="1.20.960.20">
    <property type="match status" value="1"/>
</dbReference>
<dbReference type="Gene3D" id="2.60.120.20">
    <property type="match status" value="3"/>
</dbReference>
<dbReference type="Gene3D" id="3.30.70.270">
    <property type="match status" value="1"/>
</dbReference>
<dbReference type="Gene3D" id="6.10.20.20">
    <property type="entry name" value="Poliovirus 3A protein-like"/>
    <property type="match status" value="1"/>
</dbReference>
<dbReference type="Gene3D" id="4.10.880.10">
    <property type="entry name" value="Poliovirus 3D polymerase Domain 1 (Nucleotidyltransferase)"/>
    <property type="match status" value="2"/>
</dbReference>
<dbReference type="Gene3D" id="2.40.10.10">
    <property type="entry name" value="Trypsin-like serine proteases"/>
    <property type="match status" value="4"/>
</dbReference>
<dbReference type="InterPro" id="IPR043502">
    <property type="entry name" value="DNA/RNA_pol_sf"/>
</dbReference>
<dbReference type="InterPro" id="IPR000605">
    <property type="entry name" value="Helicase_SF3_ssDNA/RNA_vir"/>
</dbReference>
<dbReference type="InterPro" id="IPR014759">
    <property type="entry name" value="Helicase_SF3_ssRNA_vir"/>
</dbReference>
<dbReference type="InterPro" id="IPR027417">
    <property type="entry name" value="P-loop_NTPase"/>
</dbReference>
<dbReference type="InterPro" id="IPR014838">
    <property type="entry name" value="P3A"/>
</dbReference>
<dbReference type="InterPro" id="IPR036203">
    <property type="entry name" value="P3A_soluble_dom"/>
</dbReference>
<dbReference type="InterPro" id="IPR044067">
    <property type="entry name" value="PCV_3C_PRO"/>
</dbReference>
<dbReference type="InterPro" id="IPR000081">
    <property type="entry name" value="Peptidase_C3"/>
</dbReference>
<dbReference type="InterPro" id="IPR000199">
    <property type="entry name" value="Peptidase_C3A/C3B_picornavir"/>
</dbReference>
<dbReference type="InterPro" id="IPR009003">
    <property type="entry name" value="Peptidase_S1_PA"/>
</dbReference>
<dbReference type="InterPro" id="IPR043504">
    <property type="entry name" value="Peptidase_S1_PA_chymotrypsin"/>
</dbReference>
<dbReference type="InterPro" id="IPR003138">
    <property type="entry name" value="Pico_P1A"/>
</dbReference>
<dbReference type="InterPro" id="IPR002527">
    <property type="entry name" value="Pico_P2B"/>
</dbReference>
<dbReference type="InterPro" id="IPR001676">
    <property type="entry name" value="Picornavirus_capsid"/>
</dbReference>
<dbReference type="InterPro" id="IPR043128">
    <property type="entry name" value="Rev_trsase/Diguanyl_cyclase"/>
</dbReference>
<dbReference type="InterPro" id="IPR033703">
    <property type="entry name" value="Rhv-like"/>
</dbReference>
<dbReference type="InterPro" id="IPR001205">
    <property type="entry name" value="RNA-dir_pol_C"/>
</dbReference>
<dbReference type="InterPro" id="IPR007094">
    <property type="entry name" value="RNA-dir_pol_PSvirus"/>
</dbReference>
<dbReference type="InterPro" id="IPR029053">
    <property type="entry name" value="Viral_coat"/>
</dbReference>
<dbReference type="Pfam" id="PF08727">
    <property type="entry name" value="P3A"/>
    <property type="match status" value="1"/>
</dbReference>
<dbReference type="Pfam" id="PF00548">
    <property type="entry name" value="Peptidase_C3"/>
    <property type="match status" value="1"/>
</dbReference>
<dbReference type="Pfam" id="PF02226">
    <property type="entry name" value="Pico_P1A"/>
    <property type="match status" value="1"/>
</dbReference>
<dbReference type="Pfam" id="PF00947">
    <property type="entry name" value="Pico_P2A"/>
    <property type="match status" value="1"/>
</dbReference>
<dbReference type="Pfam" id="PF01552">
    <property type="entry name" value="Pico_P2B"/>
    <property type="match status" value="1"/>
</dbReference>
<dbReference type="Pfam" id="PF00680">
    <property type="entry name" value="RdRP_1"/>
    <property type="match status" value="1"/>
</dbReference>
<dbReference type="Pfam" id="PF00073">
    <property type="entry name" value="Rhv"/>
    <property type="match status" value="3"/>
</dbReference>
<dbReference type="Pfam" id="PF00910">
    <property type="entry name" value="RNA_helicase"/>
    <property type="match status" value="1"/>
</dbReference>
<dbReference type="SUPFAM" id="SSF56672">
    <property type="entry name" value="DNA/RNA polymerases"/>
    <property type="match status" value="1"/>
</dbReference>
<dbReference type="SUPFAM" id="SSF52540">
    <property type="entry name" value="P-loop containing nucleoside triphosphate hydrolases"/>
    <property type="match status" value="1"/>
</dbReference>
<dbReference type="SUPFAM" id="SSF88633">
    <property type="entry name" value="Positive stranded ssRNA viruses"/>
    <property type="match status" value="2"/>
</dbReference>
<dbReference type="SUPFAM" id="SSF89043">
    <property type="entry name" value="Soluble domain of poliovirus core protein 3a"/>
    <property type="match status" value="1"/>
</dbReference>
<dbReference type="SUPFAM" id="SSF50494">
    <property type="entry name" value="Trypsin-like serine proteases"/>
    <property type="match status" value="2"/>
</dbReference>
<dbReference type="PROSITE" id="PS51874">
    <property type="entry name" value="PCV_3C_PRO"/>
    <property type="match status" value="1"/>
</dbReference>
<dbReference type="PROSITE" id="PS50507">
    <property type="entry name" value="RDRP_SSRNA_POS"/>
    <property type="match status" value="1"/>
</dbReference>
<dbReference type="PROSITE" id="PS51218">
    <property type="entry name" value="SF3_HELICASE_2"/>
    <property type="match status" value="1"/>
</dbReference>
<comment type="function">
    <molecule>Capsid protein VP1</molecule>
    <text evidence="1">Forms an icosahedral capsid of pseudo T=3 symmetry with capsid proteins VP2 and VP3 (By similarity). The capsid is 300 Angstroms in diameter, composed of 60 copies of each capsid protein and enclosing the viral positive strand RNA genome (By similarity). Capsid protein VP1 mainly forms the vertices of the capsid (By similarity). Capsid protein VP1 interacts with host cell receptor PVR to provide virion attachment to target host cells (By similarity). This attachment induces virion internalization predominantly through clathrin- and caveolin-independent endocytosis in Hela cells and through caveolin-mediated endocytosis in brain microvascular endothelial cells (By similarity). Tyrosine kinases are probably involved in the entry process (By similarity). Virus binding to PVR induces increased junctional permeability and rearrangement of junctional proteins (By similarity). Modulation of endothelial tight junctions, as well as cytolytic infection of endothelial cells themselves, may result in loss of endothelial integrity which may help the virus to reach the CNS (By similarity). After binding to its receptor, the capsid undergoes conformational changes (By similarity). Capsid protein VP1 N-terminus (that contains an amphipathic alpha-helix) and capsid protein VP4 are externalized (By similarity). Together, they shape a pore in the host membrane through which viral genome is translocated to host cell cytoplasm (By similarity).</text>
</comment>
<comment type="function">
    <molecule>Capsid protein VP2</molecule>
    <text evidence="1">Forms an icosahedral capsid of pseudo T=3 symmetry with capsid proteins VP2 and VP3 (By similarity). The capsid is 300 Angstroms in diameter, composed of 60 copies of each capsid protein and enclosing the viral positive strand RNA genome (By similarity).</text>
</comment>
<comment type="function">
    <molecule>Capsid protein VP3</molecule>
    <text evidence="1">Forms an icosahedral capsid of pseudo T=3 symmetry with capsid proteins VP2 and VP3 (By similarity). The capsid is 300 Angstroms in diameter, composed of 60 copies of each capsid protein and enclosing the viral positive strand RNA genome (By similarity).</text>
</comment>
<comment type="function">
    <molecule>Capsid protein VP4</molecule>
    <text evidence="1">Lies on the inner surface of the capsid shell (By similarity). After binding to the host receptor, the capsid undergoes conformational changes (By similarity). Capsid protein VP4 is released, Capsid protein VP1 N-terminus is externalized, and together, they shape a pore in the host membrane through which the viral genome is translocated into the host cell cytoplasm (By similarity).</text>
</comment>
<comment type="function">
    <molecule>Capsid protein VP0</molecule>
    <text evidence="1">Component of immature procapsids, which is cleaved into capsid proteins VP4 and VP2 after maturation (By similarity). Allows the capsid to remain inactive before the maturation step (By similarity).</text>
</comment>
<comment type="function">
    <molecule>Protease 2A</molecule>
    <text evidence="1 12 13">Cysteine protease that cleaves viral polyprotein and specific host proteins (PubMed:3011278). It is responsible for the autocatalytic cleavage between the P1 and P2 regions, which is the first cleavage occurring in the polyprotein (By similarity). Also cleaves the host translation initiation factor EIF4G1, in order to shut down the capped cellular mRNA translation (By similarity). Inhibits the host nucleus-cytoplasm protein and RNA trafficking by cleaving host members of the nuclear pores including NUP98, NUP62 and NUP153 (By similarity). Counteracts stress granule formation probably by antagonizing its assembly or promoting its dissassembly (PubMed:30867299). Cleaves and inhibits host IFIH1/MDA5, thereby inhibiting the type-I IFN production and the establishment of the antiviral state (By similarity). Cleaves and inhibits host MAVS, thereby inhibiting the type-I IFN production and the establishment of the antiviral state (By similarity).</text>
</comment>
<comment type="function">
    <molecule>Protein 2B</molecule>
    <text evidence="1">Plays an essential role in the virus replication cycle by acting as a viroporin. Creates a pore in the host endoplasmic reticulum and as a consequence releases Ca2+ in the cytoplasm of infected cell. In turn, high levels of cytoplasmic calcium may trigger membrane trafficking and transport of viral ER-associated proteins to viroplasms, sites of viral genome replication.</text>
</comment>
<comment type="function">
    <molecule>Protein 2C</molecule>
    <text evidence="1">Induces and associates with structural rearrangements of intracellular membranes. Displays RNA-binding, nucleotide binding and NTPase activities. May play a role in virion morphogenesis and viral RNA encapsidation by interacting with the capsid protein VP3.</text>
</comment>
<comment type="function">
    <molecule>Protein 3AB</molecule>
    <text evidence="1">Localizes the viral replication complex to the surface of membranous vesicles. Together with protein 3CD binds the Cis-Active RNA Element (CRE) which is involved in RNA synthesis initiation. Acts as a cofactor to stimulate the activity of 3D polymerase, maybe through a nucleid acid chaperone activity.</text>
</comment>
<comment type="function">
    <molecule>Protein 3A</molecule>
    <text evidence="1">Localizes the viral replication complex to the surface of membranous vesicles. It inhibits host cell endoplasmic reticulum-to-Golgi apparatus transport and causes the disassembly of the Golgi complex, possibly through GBF1 interaction (By similarity). This would result in depletion of MHC, trail receptors and IFN receptors at the host cell surface (By similarity). Plays an essential role in viral RNA replication by recruiting ACBD3 and PI4KB at the viral replication sites, thereby allowing the formation of the rearranged membranous structures where viral replication takes place (By similarity).</text>
</comment>
<comment type="function">
    <molecule>Viral protein genome-linked</molecule>
    <text evidence="1">Acts as a primer for viral RNA replication and remains covalently bound to viral genomic RNA. VPg is uridylylated prior to priming replication into VPg-pUpU. The oriI viral genomic sequence may act as a template for this. The VPg-pUpU is then used as primer on the genomic RNA poly(A) by the RNA-dependent RNA polymerase to replicate the viral genome. During genome replication, the VPg-RNA linkage is removed by the host TDP2, thereby accelerating replication. During the late stage of the replication cycle, host TDP2 is excluded from sites of viral RNA synthesis and encapsidation, allowing for the generation of progeny virions.</text>
</comment>
<comment type="function">
    <molecule>Protein 3CD</molecule>
    <text evidence="1">Involved in the viral replication complex and viral polypeptide maturation. It exhibits protease activity with a specificity and catalytic efficiency that is different from protease 3C. Protein 3CD lacks polymerase activity. Protein 3CD binds to the 5'UTR of the viral genome.</text>
</comment>
<comment type="function">
    <molecule>Protease 3C</molecule>
    <text evidence="1 2">Major viral protease that mediates proteolytic processing of the polyprotein (By similarity). Cleaves host EIF5B, contributing to host translation shutoff (By similarity). Also cleaves host PABPC1, contributing to host translation shutoff (By similarity). Cleaves host RIGI and thus contributes to the inhibition of type I interferon production (By similarity). Cleaves host NLRP1, triggers host N-glycine-mediated degradation of the autoinhibitory NLRP1 N-terminal fragment (By similarity). Inhibits the integrated stress response (ISR) in the infected cell by cleaving host G3BP1 (By similarity). Stress granule formation is thus inhibited, which allows protein synthesis and viral replication (By similarity).</text>
</comment>
<comment type="function">
    <molecule>RNA-directed RNA polymerase</molecule>
    <text evidence="1">Replicates the viral genomic RNA on the surface of intracellular membranes. May form linear arrays of subunits that propagate along a strong head-to-tail interaction called interface-I. Covalently attaches UMP to a tyrosine of VPg, which is used to prime RNA synthesis. The positive stranded RNA genome is first replicated at virus induced membranous vesicles, creating a dsRNA genomic replication form. This dsRNA is then used as template to synthesize positive stranded RNA genomes. ss(+)RNA genomes are either translated, replicated or encapsidated.</text>
</comment>
<comment type="catalytic activity">
    <molecule>Protein 2C</molecule>
    <reaction evidence="1">
        <text>a ribonucleoside 5'-triphosphate + H2O = a ribonucleoside 5'-diphosphate + phosphate + H(+)</text>
        <dbReference type="Rhea" id="RHEA:23680"/>
        <dbReference type="ChEBI" id="CHEBI:15377"/>
        <dbReference type="ChEBI" id="CHEBI:15378"/>
        <dbReference type="ChEBI" id="CHEBI:43474"/>
        <dbReference type="ChEBI" id="CHEBI:57930"/>
        <dbReference type="ChEBI" id="CHEBI:61557"/>
        <dbReference type="EC" id="3.6.1.15"/>
    </reaction>
</comment>
<comment type="catalytic activity">
    <molecule>Protease 2A</molecule>
    <reaction evidence="1">
        <text>Selective cleavage of Tyr-|-Gly bond in the picornavirus polyprotein.</text>
        <dbReference type="EC" id="3.4.22.29"/>
    </reaction>
</comment>
<comment type="catalytic activity">
    <molecule>RNA-directed RNA polymerase</molecule>
    <reaction evidence="8">
        <text>RNA(n) + a ribonucleoside 5'-triphosphate = RNA(n+1) + diphosphate</text>
        <dbReference type="Rhea" id="RHEA:21248"/>
        <dbReference type="Rhea" id="RHEA-COMP:14527"/>
        <dbReference type="Rhea" id="RHEA-COMP:17342"/>
        <dbReference type="ChEBI" id="CHEBI:33019"/>
        <dbReference type="ChEBI" id="CHEBI:61557"/>
        <dbReference type="ChEBI" id="CHEBI:140395"/>
        <dbReference type="EC" id="2.7.7.48"/>
    </reaction>
</comment>
<comment type="catalytic activity">
    <molecule>Protease 3C</molecule>
    <reaction evidence="10">
        <text>Selective cleavage of Gln-|-Gly bond in the poliovirus polyprotein. In other picornavirus reactions Glu may be substituted for Gln, and Ser or Thr for Gly.</text>
        <dbReference type="EC" id="3.4.22.28"/>
    </reaction>
</comment>
<comment type="cofactor">
    <molecule>RNA-directed RNA polymerase</molecule>
    <cofactor evidence="1">
        <name>Mg(2+)</name>
        <dbReference type="ChEBI" id="CHEBI:18420"/>
    </cofactor>
    <text evidence="1 3">Binds 2 magnesium ions that constitute a dinuclear catalytic metal center (By similarity). The magnesium ions are not prebound but only present for catalysis (By similarity). Requires the presence of 3CDpro or 3CPro (By similarity).</text>
</comment>
<comment type="activity regulation">
    <molecule>RNA-directed RNA polymerase</molecule>
    <text evidence="1">Replication or transcription is subject to high level of random mutations by the nucleotide analog ribavirin.</text>
</comment>
<comment type="subunit">
    <molecule>Capsid protein VP0</molecule>
    <text evidence="1">Interacts with capsid protein VP1 and capsid protein VP3 to form heterotrimeric protomers.</text>
</comment>
<comment type="subunit">
    <molecule>Capsid protein VP1</molecule>
    <text evidence="1">Interacts with capsid protein VP0, and capsid protein VP3 to form heterotrimeric protomers (By similarity). Interacts with human PVR (By similarity). Five protomers subsequently associate to form pentamers which serve as building blocks for the capsid (By similarity). Interacts with capsid protein VP2, capsid protein VP3 and capsid protein VP4 following cleavage of capsid protein VP0 (By similarity).</text>
</comment>
<comment type="subunit">
    <molecule>Capsid protein VP2</molecule>
    <text evidence="1">Interacts with capsid protein VP1 and capsid protein VP3 in the mature capsid.</text>
</comment>
<comment type="subunit">
    <molecule>Capsid protein VP3</molecule>
    <text evidence="1">Interacts with capsid protein VP0 and capsid protein VP1 to form heterotrimeric protomers (By similarity). Five protomers subsequently associate to form pentamers which serve as building blocks for the capsid (By similarity). Interacts with capsid protein VP4 in the mature capsid (By similarity). Interacts with protein 2C; this interaction may be important for virion morphogenesis (By similarity).</text>
</comment>
<comment type="subunit">
    <molecule>Capsid protein VP4</molecule>
    <text evidence="1">Interacts with capsid protein VP1 and capsid protein VP3.</text>
</comment>
<comment type="subunit">
    <molecule>Protease 2A</molecule>
    <text evidence="4">Homodimer.</text>
</comment>
<comment type="subunit">
    <molecule>Protein 2C</molecule>
    <text evidence="1">Homohexamer; forms a hexameric ring structure with 6-fold symmetry characteristic of AAA+ ATPases (By similarity). Interacts (via N-terminus) with host RTN3 (via reticulon domain); this interaction is important for viral replication (By similarity). Interacts with capsid protein VP3; this interaction may be important for virion morphogenesis (By similarity).</text>
</comment>
<comment type="subunit">
    <molecule>Protein 3AB</molecule>
    <text evidence="1">Interacts with protein 3CD.</text>
</comment>
<comment type="subunit">
    <molecule>Protein 3A</molecule>
    <text evidence="1">Homodimer (By similarity). Interacts with host GBF1 (By similarity). Interacts (via GOLD domain) with host ACBD3 (via GOLD domain); this interaction allows the formation of a viral protein 3A/ACBD3 heterotetramer with a 2:2 stoichiometry, which will stimulate the recruitment of host PI4KB in order to synthesize PI4P at the viral RNA replication sites (By similarity).</text>
</comment>
<comment type="subunit">
    <molecule>Viral protein genome-linked</molecule>
    <text evidence="1">Interacts with RNA-directed RNA polymerase.</text>
</comment>
<comment type="subunit">
    <molecule>Protein 3CD</molecule>
    <text evidence="1">Interacts with protein 3AB and with RNA-directed RNA polymerase.</text>
</comment>
<comment type="subunit">
    <molecule>RNA-directed RNA polymerase</molecule>
    <text evidence="1">Interacts with Viral protein genome-linked and with protein 3CD.</text>
</comment>
<comment type="subcellular location">
    <molecule>Capsid protein VP0</molecule>
    <subcellularLocation>
        <location>Virion</location>
    </subcellularLocation>
    <subcellularLocation>
        <location evidence="14">Host cytoplasm</location>
    </subcellularLocation>
</comment>
<comment type="subcellular location">
    <molecule>Capsid protein VP4</molecule>
    <subcellularLocation>
        <location>Virion</location>
    </subcellularLocation>
</comment>
<comment type="subcellular location">
    <molecule>Capsid protein VP2</molecule>
    <subcellularLocation>
        <location evidence="1">Virion</location>
    </subcellularLocation>
    <subcellularLocation>
        <location evidence="14">Host cytoplasm</location>
    </subcellularLocation>
</comment>
<comment type="subcellular location">
    <molecule>Capsid protein VP3</molecule>
    <subcellularLocation>
        <location evidence="1">Virion</location>
    </subcellularLocation>
    <subcellularLocation>
        <location evidence="14">Host cytoplasm</location>
    </subcellularLocation>
</comment>
<comment type="subcellular location">
    <molecule>Capsid protein VP1</molecule>
    <subcellularLocation>
        <location evidence="1">Virion</location>
    </subcellularLocation>
    <subcellularLocation>
        <location evidence="14">Host cytoplasm</location>
    </subcellularLocation>
</comment>
<comment type="subcellular location">
    <molecule>Protein 2B</molecule>
    <subcellularLocation>
        <location evidence="14">Host cytoplasmic vesicle membrane</location>
        <topology evidence="14">Peripheral membrane protein</topology>
        <orientation evidence="14">Cytoplasmic side</orientation>
    </subcellularLocation>
    <text>Probably localizes to the surface of intracellular membrane vesicles that are induced after virus infection as the site for viral RNA replication. These vesicles are derived from the endoplasmic reticulum.</text>
</comment>
<comment type="subcellular location">
    <molecule>Protein 2C</molecule>
    <subcellularLocation>
        <location evidence="14">Host cytoplasmic vesicle membrane</location>
        <topology evidence="14">Peripheral membrane protein</topology>
        <orientation evidence="14">Cytoplasmic side</orientation>
    </subcellularLocation>
    <text>Probably localizes to the surface of intracellular membrane vesicles that are induced after virus infection as the site for viral RNA replication. These vesicles are derived from the endoplasmic reticulum.</text>
</comment>
<comment type="subcellular location">
    <molecule>Protein 3A</molecule>
    <subcellularLocation>
        <location evidence="14">Host cytoplasmic vesicle membrane</location>
        <topology evidence="14">Peripheral membrane protein</topology>
        <orientation evidence="14">Cytoplasmic side</orientation>
    </subcellularLocation>
    <text>Probably localizes to the surface of intracellular membrane vesicles that are induced after virus infection as the site for viral RNA replication. These vesicles are derived from the endoplasmic reticulum.</text>
</comment>
<comment type="subcellular location">
    <molecule>Protein 3AB</molecule>
    <subcellularLocation>
        <location evidence="14">Host cytoplasmic vesicle membrane</location>
        <topology evidence="14">Peripheral membrane protein</topology>
        <orientation evidence="14">Cytoplasmic side</orientation>
    </subcellularLocation>
    <text>Probably localizes to the surface of intracellular membrane vesicles that are induced after virus infection as the site for viral RNA replication. These vesicles are derived from the endoplasmic reticulum.</text>
</comment>
<comment type="subcellular location">
    <molecule>Viral protein genome-linked</molecule>
    <subcellularLocation>
        <location evidence="1">Virion</location>
    </subcellularLocation>
    <subcellularLocation>
        <location evidence="5">Host cytoplasm</location>
    </subcellularLocation>
</comment>
<comment type="subcellular location">
    <molecule>Protease 3C</molecule>
    <subcellularLocation>
        <location>Host cytoplasm</location>
    </subcellularLocation>
</comment>
<comment type="subcellular location">
    <molecule>Protein 3CD</molecule>
    <subcellularLocation>
        <location evidence="1">Host nucleus</location>
    </subcellularLocation>
    <subcellularLocation>
        <location evidence="1">Host cytoplasm</location>
    </subcellularLocation>
    <subcellularLocation>
        <location evidence="14">Host cytoplasmic vesicle membrane</location>
        <topology evidence="14">Peripheral membrane protein</topology>
        <orientation evidence="14">Cytoplasmic side</orientation>
    </subcellularLocation>
    <text>Probably localizes to the surface of intracellular membrane vesicles that are induced after virus infection as the site for viral RNA replication. These vesicles are derived from the endoplasmic reticulum.</text>
</comment>
<comment type="subcellular location">
    <molecule>RNA-directed RNA polymerase</molecule>
    <subcellularLocation>
        <location evidence="14">Host cytoplasmic vesicle membrane</location>
        <topology evidence="14">Peripheral membrane protein</topology>
        <orientation evidence="14">Cytoplasmic side</orientation>
    </subcellularLocation>
    <text>Probably localizes to the surface of intracellular membrane vesicles that are induced after virus infection as the site for viral RNA replication. These vesicles are derived from the endoplasmic reticulum.</text>
</comment>
<comment type="domain">
    <molecule>Protein 2C</molecule>
    <text evidence="1">The N-terminus has membrane-binding (By similarity). The N-terminus also displays RNA-binding properties (By similarity). The N-terminus is involved in oligomerization (By similarity). The central part contains an ATPase domain and a C4-type zinc-finger (By similarity). The C-terminus is involved in RNA-binding (By similarity). The extreme C-terminus contains a region involved in oligomerization (By similarity).</text>
</comment>
<comment type="PTM">
    <molecule>Genome polyprotein</molecule>
    <text evidence="12">Specific enzymatic cleavages in vivo by the viral proteases yield processing intermediates and the mature proteins.</text>
</comment>
<comment type="PTM">
    <molecule>Capsid protein VP0</molecule>
    <text evidence="1">Myristoylation is required for the formation of pentamers during virus assembly. Further assembly of 12 pentamers and a molecule of genomic RNA generates the provirion.</text>
</comment>
<comment type="PTM">
    <molecule>Capsid protein VP0</molecule>
    <text evidence="1">During virion maturation, immature virions are rendered infectious following cleavage of VP0 into VP4 and VP2. This maturation seems to be an autocatalytic event triggered by the presence of RNA in the capsid and it is followed by a conformational change infectious virion.</text>
</comment>
<comment type="PTM">
    <molecule>Capsid protein VP4</molecule>
    <text evidence="1">Myristoylation is required during RNA encapsidation and formation of the mature virus particle.</text>
</comment>
<comment type="PTM">
    <molecule>Viral protein genome-linked</molecule>
    <text evidence="1">VPg is uridylylated by the polymerase into VPg-pUpU. This acts as a nucleotide-peptide primer for the genomic RNA replication.</text>
</comment>
<comment type="miscellaneous">
    <text evidence="14">This virus is a live vaccine strain derived from the mahoney strain by spontaneous mutations during the attenuation process.</text>
</comment>
<comment type="similarity">
    <text evidence="14">Belongs to the picornaviruses polyprotein family.</text>
</comment>
<organism>
    <name type="scientific">Poliovirus type 1 (strain Sabin)</name>
    <dbReference type="NCBI Taxonomy" id="12082"/>
    <lineage>
        <taxon>Viruses</taxon>
        <taxon>Riboviria</taxon>
        <taxon>Orthornavirae</taxon>
        <taxon>Pisuviricota</taxon>
        <taxon>Pisoniviricetes</taxon>
        <taxon>Picornavirales</taxon>
        <taxon>Picornaviridae</taxon>
        <taxon>Ensavirinae</taxon>
        <taxon>Enterovirus</taxon>
        <taxon>Enterovirus C</taxon>
    </lineage>
</organism>
<sequence length="2209" mass="246578">MGAQVSSQKVGAHENSNRAYGGSTINYTTINYYRDSASNAASKQDFSQDPSKFTEPIKDVLIKTSPMLNSPNIEACGYSDRVLQLTLGNSTITTQEAANSVVAYGRWPEYLRDSEANPVDQPTEPDVAACRFYTLDTVSWTKESRGWWWKLPDALRDMGLFGQNMYYHYLGRSGYTVHVQCNASKFHQGALGVFAVPEMCLAGDSNTTTMHTSYQNANPGEKGGTFTGTFTPDDNQTSPARRFCPVDYLFGNGTLLGNAFVFPHQIINLRTNNCATLVLPYVNSLSIDSMVKHNNWGIAILPLAPLNFASESSPEIPITLTIAPMCCEFNGLRNITLPRLQGLPVMNTPGSNQYLTADNFQSPCALPEFDVTPPIDIPGEVKNMMELAEIDTMIPFDLSAKKKNTMEMYRVRLSDKPHTDDPILCLSLSPASDPRLSHTMLGEILNYYTHWAGSLKFTFLFCGSMMATGKLLVSYAPPGADPPKKRKEAMLGTHVIWDIGLQSSCTMVVPWISNTTYRQTIDDSFTEGGYISVFYQTRIVVPLSTPREMDILGFVSACNDFSVRLMRDTTHIEQKALAQGLGQMLESMIDNTVRETVGAATSRDALPNTEASGPAHSKEIPALTAVETGATNPLVPSDTVQTRHVVQHRSRSESSIESFFARGACVAIITVDNSASTKNKDKLFTVWKITYKDTVQLRRKLEFFTYSRFDMEFTFVVTANFTETNNGHALNQVYQIMYVPPGAPVPEKWDDYTWQTSSNPSIFYTYGTAPARISVPYVGISNAYSHFYDGFSKVPLKDQSAALGDSLYGAASLNDFGILAVRVVNDHNPTKVTSKIRVYLKPKHIRVWCPRPPRAVAYYGPGVDYKDGTLTPLSTKDLTTYGFGHQNKAVYTAGYKICNYHLATQEDLQNAVNVMWNRDLLVTESRAQGTDSIARCNCNAGVYYCESRRKYYPVSFVGPTFQYMEANNYYPARYQSHMLIGHGFASPGDCGGILRCHHGVIGIITAGGEGLVAFTDIRDLYAYEEEAMEQGITNYIESLGAAFGSGFTQQIGDKITELTNMVTSTITEKLLKNLIKIISSLVIITRNYEDTTTVLATLALLGCDASPWQWLRKKACDVLEIPYVTKQGDSWLKKFTEACNAAKGLEWVSNKISKFIDWLKEKIIPQARDKLEFVTKLRQLEMLENQISTIHQSCPSQEHQEILFNNVRWLSIQSKRFAPLYAVEAKRIQKLEHTINNYIQFKSKHRIEPVCLLVHGSPGTGKSVATNLIARAIAERENTSTYSLPPDPSHFDGYKQQGVVIMDDLNQNPDGADMKLFCQMVSTVEFIPPMASLEEKGILFTSNYVLASTNSSRISPPTVAHSDALARRFAFDMDIQVMNEYSRDGKLNMAMATEMCKNCHQPANFKRCCPLVCGKAIQLMDKSSRVRYSIDQITTMIINERNRRSNIGNCMEALFQGPLQYKDLKIDIKTSPPPECINDLLQAVDSQEVRDYCEKKGWIVNITSQVQTERNINRAMTILQAVTTFAAVAGVVYVMYKLFAGHQGAYTGLPNKKPNVPTIRTAKVQGPGFDYAVAMAKRNIVTATTSKGEFTMLGVHDNVAILPTHASPGESIVIDGKEVEILDAKALEDQAGTNLEITIITLKRNEKFRDIRPHIPTQITETNDGVLIVNTSKYPNMYVPVGAVTEQGYLNLGGRQTARTLMYNFPTRAGQCGGVITCTGKVIGMHVGGNGSHGFAAALKRSYFTQSQGEIQWMRPSKEVGYPIINAPSKTKLEPSAFHYVFEGVKEPAVLTKNDPRLKTNFEEAIFSKYVGNKITEVDEHMKEAVDHYAGQLMSLDINTEQMCLEDAMYGTDGLEALDLSTSAGYPYVAMGKKKRDILNKQTRDTKEMQKLLDTYGINLPLVTYVKDELRSKTKVEQGKSRLIEASSLNDSVAMRMAFGNLYAAFHKNPGVITGSAVGCDPDLFWSKIPVLMEEKLFAFDYTGYDASLSPAWFEALEMVLEKIGFGDRVDYIDYLNHSHHLYKNKTYCVKGGMPSGCSGTSIFNSMINNLIIRTLLLKTYKGIDLDHLKMIAYGDDVIASYPHEVDASLLAQSGKDYGLTMTPADKSAIFETVTWENVTFLKRFFRADEKYPFLIHPVMPMKEIHESIRWTKDPRNTQDHVRSLCLLAWHNGEEEYNKFLAKIRSVPIGRALLLPEYSTLYRRWLDSF</sequence>
<name>POLG_POL1S</name>
<proteinExistence type="evidence at protein level"/>